<sequence length="171" mass="19485">MLQTFPRVAKCVRAYSSKPTLGPKFQSLDEIKEYIFKDTISANEFLTQSERAKDRELPVPPRETVLKLLKLSGLPTKGADIERIQRNLSEQISFINILHDTDLDDSLNVKYARLLPRENATLSYGDLIVRANSGKNSELAEISGSWDSTSRASMRKDGYFIVREEFLDNRD</sequence>
<feature type="chain" id="PRO_0000413409" description="Glutamyl-tRNA(Gln) amidotransferase subunit F, mitochondrial">
    <location>
        <begin position="1"/>
        <end position="171"/>
    </location>
</feature>
<proteinExistence type="inferred from homology"/>
<comment type="function">
    <text evidence="1">Allows the formation of correctly charged Gln-tRNA(Gln) through the transamidation of misacylated Glu-tRNA(Gln) in the mitochondria. The reaction takes place in the presence of glutamine and ATP through an activated gamma-phospho-Glu-tRNA(Gln). Required for proper protein synthesis within the mitochondrion.</text>
</comment>
<comment type="catalytic activity">
    <reaction evidence="1">
        <text>L-glutamyl-tRNA(Gln) + L-glutamine + ATP + H2O = L-glutaminyl-tRNA(Gln) + L-glutamate + ADP + phosphate + H(+)</text>
        <dbReference type="Rhea" id="RHEA:17521"/>
        <dbReference type="Rhea" id="RHEA-COMP:9681"/>
        <dbReference type="Rhea" id="RHEA-COMP:9684"/>
        <dbReference type="ChEBI" id="CHEBI:15377"/>
        <dbReference type="ChEBI" id="CHEBI:15378"/>
        <dbReference type="ChEBI" id="CHEBI:29985"/>
        <dbReference type="ChEBI" id="CHEBI:30616"/>
        <dbReference type="ChEBI" id="CHEBI:43474"/>
        <dbReference type="ChEBI" id="CHEBI:58359"/>
        <dbReference type="ChEBI" id="CHEBI:78520"/>
        <dbReference type="ChEBI" id="CHEBI:78521"/>
        <dbReference type="ChEBI" id="CHEBI:456216"/>
    </reaction>
</comment>
<comment type="subunit">
    <text evidence="1">Subunit of the heterotrimeric GatFAB amidotransferase (AdT) complex, composed of A, B and F subunits.</text>
</comment>
<comment type="subcellular location">
    <subcellularLocation>
        <location evidence="1">Mitochondrion inner membrane</location>
        <topology evidence="1">Peripheral membrane protein</topology>
        <orientation evidence="1">Matrix side</orientation>
    </subcellularLocation>
</comment>
<comment type="miscellaneous">
    <text evidence="1">This protein may be expected to contain an N-terminal transit peptide but none has been predicted.</text>
</comment>
<comment type="similarity">
    <text evidence="1">Belongs to the GatF family.</text>
</comment>
<protein>
    <recommendedName>
        <fullName evidence="1">Glutamyl-tRNA(Gln) amidotransferase subunit F, mitochondrial</fullName>
        <shortName evidence="1">Glu-AdT subunit F</shortName>
        <ecNumber evidence="1">6.3.5.-</ecNumber>
    </recommendedName>
</protein>
<reference key="1">
    <citation type="journal article" date="2009" name="Genome Res.">
        <title>Comparative genomics of protoploid Saccharomycetaceae.</title>
        <authorList>
            <consortium name="The Genolevures Consortium"/>
            <person name="Souciet J.-L."/>
            <person name="Dujon B."/>
            <person name="Gaillardin C."/>
            <person name="Johnston M."/>
            <person name="Baret P.V."/>
            <person name="Cliften P."/>
            <person name="Sherman D.J."/>
            <person name="Weissenbach J."/>
            <person name="Westhof E."/>
            <person name="Wincker P."/>
            <person name="Jubin C."/>
            <person name="Poulain J."/>
            <person name="Barbe V."/>
            <person name="Segurens B."/>
            <person name="Artiguenave F."/>
            <person name="Anthouard V."/>
            <person name="Vacherie B."/>
            <person name="Val M.-E."/>
            <person name="Fulton R.S."/>
            <person name="Minx P."/>
            <person name="Wilson R."/>
            <person name="Durrens P."/>
            <person name="Jean G."/>
            <person name="Marck C."/>
            <person name="Martin T."/>
            <person name="Nikolski M."/>
            <person name="Rolland T."/>
            <person name="Seret M.-L."/>
            <person name="Casaregola S."/>
            <person name="Despons L."/>
            <person name="Fairhead C."/>
            <person name="Fischer G."/>
            <person name="Lafontaine I."/>
            <person name="Leh V."/>
            <person name="Lemaire M."/>
            <person name="de Montigny J."/>
            <person name="Neuveglise C."/>
            <person name="Thierry A."/>
            <person name="Blanc-Lenfle I."/>
            <person name="Bleykasten C."/>
            <person name="Diffels J."/>
            <person name="Fritsch E."/>
            <person name="Frangeul L."/>
            <person name="Goeffon A."/>
            <person name="Jauniaux N."/>
            <person name="Kachouri-Lafond R."/>
            <person name="Payen C."/>
            <person name="Potier S."/>
            <person name="Pribylova L."/>
            <person name="Ozanne C."/>
            <person name="Richard G.-F."/>
            <person name="Sacerdot C."/>
            <person name="Straub M.-L."/>
            <person name="Talla E."/>
        </authorList>
    </citation>
    <scope>NUCLEOTIDE SEQUENCE [LARGE SCALE GENOMIC DNA]</scope>
    <source>
        <strain>ATCC 2623 / CBS 732 / BCRC 21506 / NBRC 1130 / NCYC 568 / NRRL Y-229</strain>
    </source>
</reference>
<evidence type="ECO:0000255" key="1">
    <source>
        <dbReference type="HAMAP-Rule" id="MF_03151"/>
    </source>
</evidence>
<name>GATF_ZYGRC</name>
<organism>
    <name type="scientific">Zygosaccharomyces rouxii (strain ATCC 2623 / CBS 732 / NBRC 1130 / NCYC 568 / NRRL Y-229)</name>
    <dbReference type="NCBI Taxonomy" id="559307"/>
    <lineage>
        <taxon>Eukaryota</taxon>
        <taxon>Fungi</taxon>
        <taxon>Dikarya</taxon>
        <taxon>Ascomycota</taxon>
        <taxon>Saccharomycotina</taxon>
        <taxon>Saccharomycetes</taxon>
        <taxon>Saccharomycetales</taxon>
        <taxon>Saccharomycetaceae</taxon>
        <taxon>Zygosaccharomyces</taxon>
    </lineage>
</organism>
<gene>
    <name evidence="1" type="primary">GTF1</name>
    <name type="ordered locus">ZYRO0C12782g</name>
</gene>
<dbReference type="EC" id="6.3.5.-" evidence="1"/>
<dbReference type="EMBL" id="CU928175">
    <property type="protein sequence ID" value="CAR27267.1"/>
    <property type="molecule type" value="Genomic_DNA"/>
</dbReference>
<dbReference type="RefSeq" id="XP_002496200.1">
    <property type="nucleotide sequence ID" value="XM_002496155.1"/>
</dbReference>
<dbReference type="SMR" id="C5DU06"/>
<dbReference type="FunCoup" id="C5DU06">
    <property type="interactions" value="86"/>
</dbReference>
<dbReference type="STRING" id="559307.C5DU06"/>
<dbReference type="GeneID" id="8203419"/>
<dbReference type="KEGG" id="zro:ZYRO0C12782g"/>
<dbReference type="HOGENOM" id="CLU_120617_0_0_1"/>
<dbReference type="InParanoid" id="C5DU06"/>
<dbReference type="Proteomes" id="UP000008536">
    <property type="component" value="Chromosome C"/>
</dbReference>
<dbReference type="GO" id="GO:0030956">
    <property type="term" value="C:glutamyl-tRNA(Gln) amidotransferase complex"/>
    <property type="evidence" value="ECO:0007669"/>
    <property type="project" value="UniProtKB-UniRule"/>
</dbReference>
<dbReference type="GO" id="GO:0005743">
    <property type="term" value="C:mitochondrial inner membrane"/>
    <property type="evidence" value="ECO:0007669"/>
    <property type="project" value="UniProtKB-SubCell"/>
</dbReference>
<dbReference type="GO" id="GO:0005524">
    <property type="term" value="F:ATP binding"/>
    <property type="evidence" value="ECO:0007669"/>
    <property type="project" value="UniProtKB-KW"/>
</dbReference>
<dbReference type="GO" id="GO:0050567">
    <property type="term" value="F:glutaminyl-tRNA synthase (glutamine-hydrolyzing) activity"/>
    <property type="evidence" value="ECO:0007669"/>
    <property type="project" value="UniProtKB-UniRule"/>
</dbReference>
<dbReference type="GO" id="GO:0070681">
    <property type="term" value="P:glutaminyl-tRNAGln biosynthesis via transamidation"/>
    <property type="evidence" value="ECO:0007669"/>
    <property type="project" value="UniProtKB-UniRule"/>
</dbReference>
<dbReference type="GO" id="GO:0032543">
    <property type="term" value="P:mitochondrial translation"/>
    <property type="evidence" value="ECO:0007669"/>
    <property type="project" value="UniProtKB-UniRule"/>
</dbReference>
<dbReference type="CDD" id="cd21422">
    <property type="entry name" value="GatF"/>
    <property type="match status" value="1"/>
</dbReference>
<dbReference type="HAMAP" id="MF_03151">
    <property type="entry name" value="GatF"/>
    <property type="match status" value="1"/>
</dbReference>
<dbReference type="InterPro" id="IPR027499">
    <property type="entry name" value="GatF"/>
</dbReference>
<dbReference type="Pfam" id="PF20977">
    <property type="entry name" value="GatF"/>
    <property type="match status" value="1"/>
</dbReference>
<accession>C5DU06</accession>
<keyword id="KW-0067">ATP-binding</keyword>
<keyword id="KW-0436">Ligase</keyword>
<keyword id="KW-0472">Membrane</keyword>
<keyword id="KW-0496">Mitochondrion</keyword>
<keyword id="KW-0999">Mitochondrion inner membrane</keyword>
<keyword id="KW-0547">Nucleotide-binding</keyword>
<keyword id="KW-0648">Protein biosynthesis</keyword>
<keyword id="KW-1185">Reference proteome</keyword>